<proteinExistence type="inferred from homology"/>
<name>IHFB_DECAR</name>
<dbReference type="EMBL" id="CP000089">
    <property type="protein sequence ID" value="AAZ46033.1"/>
    <property type="molecule type" value="Genomic_DNA"/>
</dbReference>
<dbReference type="SMR" id="Q47GJ8"/>
<dbReference type="STRING" id="159087.Daro_1281"/>
<dbReference type="KEGG" id="dar:Daro_1281"/>
<dbReference type="eggNOG" id="COG0776">
    <property type="taxonomic scope" value="Bacteria"/>
</dbReference>
<dbReference type="HOGENOM" id="CLU_105066_2_0_4"/>
<dbReference type="OrthoDB" id="9804203at2"/>
<dbReference type="GO" id="GO:0005694">
    <property type="term" value="C:chromosome"/>
    <property type="evidence" value="ECO:0007669"/>
    <property type="project" value="InterPro"/>
</dbReference>
<dbReference type="GO" id="GO:0005829">
    <property type="term" value="C:cytosol"/>
    <property type="evidence" value="ECO:0007669"/>
    <property type="project" value="TreeGrafter"/>
</dbReference>
<dbReference type="GO" id="GO:0003677">
    <property type="term" value="F:DNA binding"/>
    <property type="evidence" value="ECO:0007669"/>
    <property type="project" value="UniProtKB-UniRule"/>
</dbReference>
<dbReference type="GO" id="GO:0030527">
    <property type="term" value="F:structural constituent of chromatin"/>
    <property type="evidence" value="ECO:0007669"/>
    <property type="project" value="InterPro"/>
</dbReference>
<dbReference type="GO" id="GO:0006310">
    <property type="term" value="P:DNA recombination"/>
    <property type="evidence" value="ECO:0007669"/>
    <property type="project" value="UniProtKB-UniRule"/>
</dbReference>
<dbReference type="GO" id="GO:0006355">
    <property type="term" value="P:regulation of DNA-templated transcription"/>
    <property type="evidence" value="ECO:0007669"/>
    <property type="project" value="UniProtKB-UniRule"/>
</dbReference>
<dbReference type="GO" id="GO:0006417">
    <property type="term" value="P:regulation of translation"/>
    <property type="evidence" value="ECO:0007669"/>
    <property type="project" value="UniProtKB-UniRule"/>
</dbReference>
<dbReference type="CDD" id="cd13836">
    <property type="entry name" value="IHF_B"/>
    <property type="match status" value="1"/>
</dbReference>
<dbReference type="Gene3D" id="4.10.520.10">
    <property type="entry name" value="IHF-like DNA-binding proteins"/>
    <property type="match status" value="1"/>
</dbReference>
<dbReference type="HAMAP" id="MF_00381">
    <property type="entry name" value="IHF_beta"/>
    <property type="match status" value="1"/>
</dbReference>
<dbReference type="InterPro" id="IPR000119">
    <property type="entry name" value="Hist_DNA-bd"/>
</dbReference>
<dbReference type="InterPro" id="IPR010992">
    <property type="entry name" value="IHF-like_DNA-bd_dom_sf"/>
</dbReference>
<dbReference type="InterPro" id="IPR005685">
    <property type="entry name" value="IHF_beta"/>
</dbReference>
<dbReference type="NCBIfam" id="TIGR00988">
    <property type="entry name" value="hip"/>
    <property type="match status" value="1"/>
</dbReference>
<dbReference type="NCBIfam" id="NF001222">
    <property type="entry name" value="PRK00199.1"/>
    <property type="match status" value="1"/>
</dbReference>
<dbReference type="PANTHER" id="PTHR33175">
    <property type="entry name" value="DNA-BINDING PROTEIN HU"/>
    <property type="match status" value="1"/>
</dbReference>
<dbReference type="PANTHER" id="PTHR33175:SF5">
    <property type="entry name" value="INTEGRATION HOST FACTOR SUBUNIT BETA"/>
    <property type="match status" value="1"/>
</dbReference>
<dbReference type="Pfam" id="PF00216">
    <property type="entry name" value="Bac_DNA_binding"/>
    <property type="match status" value="1"/>
</dbReference>
<dbReference type="PRINTS" id="PR01727">
    <property type="entry name" value="DNABINDINGHU"/>
</dbReference>
<dbReference type="SMART" id="SM00411">
    <property type="entry name" value="BHL"/>
    <property type="match status" value="1"/>
</dbReference>
<dbReference type="SUPFAM" id="SSF47729">
    <property type="entry name" value="IHF-like DNA-binding proteins"/>
    <property type="match status" value="1"/>
</dbReference>
<comment type="function">
    <text evidence="1">This protein is one of the two subunits of integration host factor, a specific DNA-binding protein that functions in genetic recombination as well as in transcriptional and translational control.</text>
</comment>
<comment type="subunit">
    <text evidence="1">Heterodimer of an alpha and a beta chain.</text>
</comment>
<comment type="similarity">
    <text evidence="1">Belongs to the bacterial histone-like protein family.</text>
</comment>
<evidence type="ECO:0000255" key="1">
    <source>
        <dbReference type="HAMAP-Rule" id="MF_00381"/>
    </source>
</evidence>
<sequence length="94" mass="10551">MTKSELIAQLAERFPQLVAKDADFAVKMILDAMSEALVRGDRIEIRGFGSFALNYRPPRVGRNPKSGEKVSVPAKWVPHFKAGKELRERVDQAI</sequence>
<keyword id="KW-0233">DNA recombination</keyword>
<keyword id="KW-0238">DNA-binding</keyword>
<keyword id="KW-0804">Transcription</keyword>
<keyword id="KW-0805">Transcription regulation</keyword>
<keyword id="KW-0810">Translation regulation</keyword>
<reference key="1">
    <citation type="journal article" date="2009" name="BMC Genomics">
        <title>Metabolic analysis of the soil microbe Dechloromonas aromatica str. RCB: indications of a surprisingly complex life-style and cryptic anaerobic pathways for aromatic degradation.</title>
        <authorList>
            <person name="Salinero K.K."/>
            <person name="Keller K."/>
            <person name="Feil W.S."/>
            <person name="Feil H."/>
            <person name="Trong S."/>
            <person name="Di Bartolo G."/>
            <person name="Lapidus A."/>
        </authorList>
    </citation>
    <scope>NUCLEOTIDE SEQUENCE [LARGE SCALE GENOMIC DNA]</scope>
    <source>
        <strain>RCB</strain>
    </source>
</reference>
<feature type="chain" id="PRO_1000060597" description="Integration host factor subunit beta">
    <location>
        <begin position="1"/>
        <end position="94"/>
    </location>
</feature>
<accession>Q47GJ8</accession>
<protein>
    <recommendedName>
        <fullName evidence="1">Integration host factor subunit beta</fullName>
        <shortName evidence="1">IHF-beta</shortName>
    </recommendedName>
</protein>
<organism>
    <name type="scientific">Dechloromonas aromatica (strain RCB)</name>
    <dbReference type="NCBI Taxonomy" id="159087"/>
    <lineage>
        <taxon>Bacteria</taxon>
        <taxon>Pseudomonadati</taxon>
        <taxon>Pseudomonadota</taxon>
        <taxon>Betaproteobacteria</taxon>
        <taxon>Rhodocyclales</taxon>
        <taxon>Azonexaceae</taxon>
        <taxon>Dechloromonas</taxon>
    </lineage>
</organism>
<gene>
    <name evidence="1" type="primary">ihfB</name>
    <name evidence="1" type="synonym">himD</name>
    <name type="ordered locus">Daro_1281</name>
</gene>